<feature type="chain" id="PRO_0000377943" description="Uncharacterized protein 015R">
    <location>
        <begin position="1"/>
        <end position="142"/>
    </location>
</feature>
<accession>Q197E5</accession>
<keyword id="KW-1185">Reference proteome</keyword>
<organismHost>
    <name type="scientific">Aedes vexans</name>
    <name type="common">Inland floodwater mosquito</name>
    <name type="synonym">Culex vexans</name>
    <dbReference type="NCBI Taxonomy" id="7163"/>
</organismHost>
<organismHost>
    <name type="scientific">Culex territans</name>
    <dbReference type="NCBI Taxonomy" id="42431"/>
</organismHost>
<organismHost>
    <name type="scientific">Culiseta annulata</name>
    <dbReference type="NCBI Taxonomy" id="332058"/>
</organismHost>
<organismHost>
    <name type="scientific">Ochlerotatus sollicitans</name>
    <name type="common">eastern saltmarsh mosquito</name>
    <dbReference type="NCBI Taxonomy" id="310513"/>
</organismHost>
<organismHost>
    <name type="scientific">Ochlerotatus taeniorhynchus</name>
    <name type="common">Black salt marsh mosquito</name>
    <name type="synonym">Aedes taeniorhynchus</name>
    <dbReference type="NCBI Taxonomy" id="329105"/>
</organismHost>
<organismHost>
    <name type="scientific">Psorophora ferox</name>
    <dbReference type="NCBI Taxonomy" id="7183"/>
</organismHost>
<organism>
    <name type="scientific">Invertebrate iridescent virus 3</name>
    <name type="common">IIV-3</name>
    <name type="synonym">Mosquito iridescent virus</name>
    <dbReference type="NCBI Taxonomy" id="345201"/>
    <lineage>
        <taxon>Viruses</taxon>
        <taxon>Varidnaviria</taxon>
        <taxon>Bamfordvirae</taxon>
        <taxon>Nucleocytoviricota</taxon>
        <taxon>Megaviricetes</taxon>
        <taxon>Pimascovirales</taxon>
        <taxon>Iridoviridae</taxon>
        <taxon>Betairidovirinae</taxon>
        <taxon>Chloriridovirus</taxon>
    </lineage>
</organism>
<comment type="similarity">
    <text evidence="1">Belongs to the IIV-3 015R family.</text>
</comment>
<gene>
    <name type="ORF">IIV3-015R</name>
</gene>
<sequence length="142" mass="16862">MKYYSNPSFGGMDKNCKMSPRQVTIKAKELWLVNSTMTIAKKNLKKMEKVYDYLNQINIKTLSPESVIYYELWFMFIVECIHIQKIIIEYFQHEKNGEKQPITIGEIVYKIKMMLKPISVPFLKVKTGHVKLFIPEQIFNKF</sequence>
<dbReference type="EMBL" id="DQ643392">
    <property type="protein sequence ID" value="ABF82045.1"/>
    <property type="molecule type" value="Genomic_DNA"/>
</dbReference>
<dbReference type="RefSeq" id="YP_654587.1">
    <property type="nucleotide sequence ID" value="NC_008187.1"/>
</dbReference>
<dbReference type="KEGG" id="vg:4156264"/>
<dbReference type="OrthoDB" id="27682at10239"/>
<dbReference type="Proteomes" id="UP000001358">
    <property type="component" value="Genome"/>
</dbReference>
<evidence type="ECO:0000305" key="1"/>
<name>VF015_IIV3</name>
<proteinExistence type="inferred from homology"/>
<protein>
    <recommendedName>
        <fullName>Uncharacterized protein 015R</fullName>
    </recommendedName>
</protein>
<reference key="1">
    <citation type="journal article" date="2006" name="J. Virol.">
        <title>Genome of invertebrate iridescent virus type 3 (mosquito iridescent virus).</title>
        <authorList>
            <person name="Delhon G."/>
            <person name="Tulman E.R."/>
            <person name="Afonso C.L."/>
            <person name="Lu Z."/>
            <person name="Becnel J.J."/>
            <person name="Moser B.A."/>
            <person name="Kutish G.F."/>
            <person name="Rock D.L."/>
        </authorList>
    </citation>
    <scope>NUCLEOTIDE SEQUENCE [LARGE SCALE GENOMIC DNA]</scope>
</reference>